<organism>
    <name type="scientific">Aspergillus fumigatus (strain ATCC MYA-4609 / CBS 101355 / FGSC A1100 / Af293)</name>
    <name type="common">Neosartorya fumigata</name>
    <dbReference type="NCBI Taxonomy" id="330879"/>
    <lineage>
        <taxon>Eukaryota</taxon>
        <taxon>Fungi</taxon>
        <taxon>Dikarya</taxon>
        <taxon>Ascomycota</taxon>
        <taxon>Pezizomycotina</taxon>
        <taxon>Eurotiomycetes</taxon>
        <taxon>Eurotiomycetidae</taxon>
        <taxon>Eurotiales</taxon>
        <taxon>Aspergillaceae</taxon>
        <taxon>Aspergillus</taxon>
        <taxon>Aspergillus subgen. Fumigati</taxon>
    </lineage>
</organism>
<protein>
    <recommendedName>
        <fullName evidence="9">AA11 family lytic polysaccharide monooxygenase B</fullName>
        <shortName evidence="9">LPMO11B</shortName>
        <ecNumber evidence="7">1.14.99.-</ecNumber>
    </recommendedName>
</protein>
<reference key="1">
    <citation type="journal article" date="2005" name="Nature">
        <title>Genomic sequence of the pathogenic and allergenic filamentous fungus Aspergillus fumigatus.</title>
        <authorList>
            <person name="Nierman W.C."/>
            <person name="Pain A."/>
            <person name="Anderson M.J."/>
            <person name="Wortman J.R."/>
            <person name="Kim H.S."/>
            <person name="Arroyo J."/>
            <person name="Berriman M."/>
            <person name="Abe K."/>
            <person name="Archer D.B."/>
            <person name="Bermejo C."/>
            <person name="Bennett J.W."/>
            <person name="Bowyer P."/>
            <person name="Chen D."/>
            <person name="Collins M."/>
            <person name="Coulsen R."/>
            <person name="Davies R."/>
            <person name="Dyer P.S."/>
            <person name="Farman M.L."/>
            <person name="Fedorova N."/>
            <person name="Fedorova N.D."/>
            <person name="Feldblyum T.V."/>
            <person name="Fischer R."/>
            <person name="Fosker N."/>
            <person name="Fraser A."/>
            <person name="Garcia J.L."/>
            <person name="Garcia M.J."/>
            <person name="Goble A."/>
            <person name="Goldman G.H."/>
            <person name="Gomi K."/>
            <person name="Griffith-Jones S."/>
            <person name="Gwilliam R."/>
            <person name="Haas B.J."/>
            <person name="Haas H."/>
            <person name="Harris D.E."/>
            <person name="Horiuchi H."/>
            <person name="Huang J."/>
            <person name="Humphray S."/>
            <person name="Jimenez J."/>
            <person name="Keller N."/>
            <person name="Khouri H."/>
            <person name="Kitamoto K."/>
            <person name="Kobayashi T."/>
            <person name="Konzack S."/>
            <person name="Kulkarni R."/>
            <person name="Kumagai T."/>
            <person name="Lafton A."/>
            <person name="Latge J.-P."/>
            <person name="Li W."/>
            <person name="Lord A."/>
            <person name="Lu C."/>
            <person name="Majoros W.H."/>
            <person name="May G.S."/>
            <person name="Miller B.L."/>
            <person name="Mohamoud Y."/>
            <person name="Molina M."/>
            <person name="Monod M."/>
            <person name="Mouyna I."/>
            <person name="Mulligan S."/>
            <person name="Murphy L.D."/>
            <person name="O'Neil S."/>
            <person name="Paulsen I."/>
            <person name="Penalva M.A."/>
            <person name="Pertea M."/>
            <person name="Price C."/>
            <person name="Pritchard B.L."/>
            <person name="Quail M.A."/>
            <person name="Rabbinowitsch E."/>
            <person name="Rawlins N."/>
            <person name="Rajandream M.A."/>
            <person name="Reichard U."/>
            <person name="Renauld H."/>
            <person name="Robson G.D."/>
            <person name="Rodriguez de Cordoba S."/>
            <person name="Rodriguez-Pena J.M."/>
            <person name="Ronning C.M."/>
            <person name="Rutter S."/>
            <person name="Salzberg S.L."/>
            <person name="Sanchez M."/>
            <person name="Sanchez-Ferrero J.C."/>
            <person name="Saunders D."/>
            <person name="Seeger K."/>
            <person name="Squares R."/>
            <person name="Squares S."/>
            <person name="Takeuchi M."/>
            <person name="Tekaia F."/>
            <person name="Turner G."/>
            <person name="Vazquez de Aldana C.R."/>
            <person name="Weidman J."/>
            <person name="White O."/>
            <person name="Woodward J.R."/>
            <person name="Yu J.-H."/>
            <person name="Fraser C.M."/>
            <person name="Galagan J.E."/>
            <person name="Asai K."/>
            <person name="Machida M."/>
            <person name="Hall N."/>
            <person name="Barrell B.G."/>
            <person name="Denning D.W."/>
        </authorList>
    </citation>
    <scope>NUCLEOTIDE SEQUENCE [LARGE SCALE GENOMIC DNA]</scope>
    <source>
        <strain>ATCC MYA-4609 / CBS 101355 / FGSC A1100 / Af293</strain>
    </source>
</reference>
<reference key="2">
    <citation type="journal article" date="2021" name="ACS Catal.">
        <title>Kinetic characterization of a putatively chitin-Active LPMO rReveals a preference for soluble substrates and absence of monooxygenase activity.</title>
        <authorList>
            <person name="Rieder L."/>
            <person name="Petrovic D."/>
            <person name="Vaeljamaee P."/>
            <person name="Eijsink V.G.H."/>
            <person name="Soerlie M."/>
        </authorList>
    </citation>
    <scope>FUNCTION</scope>
    <scope>CATALYTIC ACTIVITY</scope>
    <scope>BIOPHYSICOCHEMICAL PROPERTIES</scope>
</reference>
<reference key="3">
    <citation type="journal article" date="2021" name="Biotechnol. Biofuels">
        <title>Novel molecular biological tools for the efficient expression of fungal lytic polysaccharide monooxygenases in Pichia pastoris.</title>
        <authorList>
            <person name="Rieder L."/>
            <person name="Ebner K."/>
            <person name="Glieder A."/>
            <person name="Soerlie M."/>
        </authorList>
    </citation>
    <scope>SUBCELLULAR LOCATION</scope>
</reference>
<reference key="4">
    <citation type="journal article" date="2021" name="Biochemistry">
        <title>Fast and sSpecific peroxygenase reactions Catalyzed by fungal mono-copper enzymes.</title>
        <authorList>
            <person name="Rieder L."/>
            <person name="Stepnov A.A."/>
            <person name="Soerlie M."/>
            <person name="Eijsink V.G.H."/>
        </authorList>
    </citation>
    <scope>FUNCTION</scope>
</reference>
<evidence type="ECO:0000250" key="1">
    <source>
        <dbReference type="UniProtKB" id="B0XZD3"/>
    </source>
</evidence>
<evidence type="ECO:0000250" key="2">
    <source>
        <dbReference type="UniProtKB" id="Q2UA85"/>
    </source>
</evidence>
<evidence type="ECO:0000255" key="3"/>
<evidence type="ECO:0000255" key="4">
    <source>
        <dbReference type="PROSITE-ProRule" id="PRU00498"/>
    </source>
</evidence>
<evidence type="ECO:0000256" key="5">
    <source>
        <dbReference type="SAM" id="MobiDB-lite"/>
    </source>
</evidence>
<evidence type="ECO:0000269" key="6">
    <source>
    </source>
</evidence>
<evidence type="ECO:0000269" key="7">
    <source>
    </source>
</evidence>
<evidence type="ECO:0000269" key="8">
    <source>
    </source>
</evidence>
<evidence type="ECO:0000303" key="9">
    <source>
    </source>
</evidence>
<evidence type="ECO:0000305" key="10"/>
<name>LP11B_ASPFU</name>
<comment type="function">
    <text evidence="7 8">Lytic polysaccharide monooxygenase (LPMO)-like protein that acts as a strict peroxygenase and does not catalyze a monooxygenase reaction (PubMed:34567832). It is indeed hardly active on chitin, while being very active on soluble oligomers of N-acetylglucosamine (PubMed:34567832). Cleaves the glycosidic bonds byoxidizing the C1 position (PubMed:34567832). Also unable to oxidize cellopentaose (PubMed:34738811). Probably breaks glycosidic bonds in non-polymeric substrates possibly carbohydrates in the cell wall of the fungus or its competitors (PubMed:34567832). In the presence of chitotetraose, the enzyme can withstand considerable amounts of H(2)O(2), which it uses to efficiently and stoichiometrically convert this substrate (PubMed:34567832).</text>
</comment>
<comment type="cofactor">
    <cofactor evidence="1">
        <name>Cu(2+)</name>
        <dbReference type="ChEBI" id="CHEBI:29036"/>
    </cofactor>
    <text evidence="1">Binds 1 copper ion per subunit.</text>
</comment>
<comment type="biophysicochemical properties">
    <kinetics>
        <KM evidence="7">2.8 uM for H(2)O(2)</KM>
    </kinetics>
</comment>
<comment type="subcellular location">
    <subcellularLocation>
        <location evidence="6">Secreted</location>
    </subcellularLocation>
</comment>
<comment type="similarity">
    <text evidence="10">Belongs to the polysaccharide monooxygenase AA11 family.</text>
</comment>
<keyword id="KW-0119">Carbohydrate metabolism</keyword>
<keyword id="KW-0136">Cellulose degradation</keyword>
<keyword id="KW-0186">Copper</keyword>
<keyword id="KW-1015">Disulfide bond</keyword>
<keyword id="KW-0325">Glycoprotein</keyword>
<keyword id="KW-0479">Metal-binding</keyword>
<keyword id="KW-0503">Monooxygenase</keyword>
<keyword id="KW-0560">Oxidoreductase</keyword>
<keyword id="KW-0624">Polysaccharide degradation</keyword>
<keyword id="KW-1185">Reference proteome</keyword>
<keyword id="KW-0964">Secreted</keyword>
<keyword id="KW-0732">Signal</keyword>
<proteinExistence type="evidence at protein level"/>
<sequence>MMFSKSGLVAVAMLGASAVEAHMKMRQPTPYSDSSLNNSPLAADGSDFPCKLRDNAFVPPSQETIAQIGEVMPLTFTGSATHGGGSCQVSLTTDLKPSKDSKWMVIKSIEGGCPANVDGNMSGGADVPDPFEFNYTIPAGIEPGKYTLAWTWFNRIGNREMYMNCAPITVTAGSSKRDAAPVAEKVEVEKRSANFPAMFVANINGCTTKEGVDIRFPDPGDVVEYDGNPSNLQPAGEAACSGTPAWTVSGGSGSPSTPSTSSSTPAGTSAGVSVSVGATVGATPTAEPESSSSEPAESEGAPGVFAPTSATVFPSTPTASAAPTSSSSGAGSESDSSSSSNGALTGPCSTEGLWNCIDGSSFQRCANGQWTTAQQMAAGTECTVGQNAQFTISATAVKPRMINAMRHRKRAHGGHRHA</sequence>
<gene>
    <name evidence="9" type="primary">AA11B</name>
    <name type="ORF">AFUA_5G03010</name>
</gene>
<dbReference type="EC" id="1.14.99.-" evidence="7"/>
<dbReference type="EMBL" id="AAHF01000011">
    <property type="protein sequence ID" value="EAL86004.1"/>
    <property type="molecule type" value="Genomic_DNA"/>
</dbReference>
<dbReference type="RefSeq" id="XP_748042.1">
    <property type="nucleotide sequence ID" value="XM_742949.1"/>
</dbReference>
<dbReference type="SMR" id="Q4WEH3"/>
<dbReference type="STRING" id="330879.Q4WEH3"/>
<dbReference type="EnsemblFungi" id="EAL86004">
    <property type="protein sequence ID" value="EAL86004"/>
    <property type="gene ID" value="AFUA_5G03010"/>
</dbReference>
<dbReference type="GeneID" id="3505717"/>
<dbReference type="KEGG" id="afm:AFUA_5G03010"/>
<dbReference type="VEuPathDB" id="FungiDB:Afu5g03010"/>
<dbReference type="eggNOG" id="ENOG502S005">
    <property type="taxonomic scope" value="Eukaryota"/>
</dbReference>
<dbReference type="HOGENOM" id="CLU_032571_1_0_1"/>
<dbReference type="InParanoid" id="Q4WEH3"/>
<dbReference type="OMA" id="TWFNHVG"/>
<dbReference type="OrthoDB" id="2342176at2759"/>
<dbReference type="Proteomes" id="UP000002530">
    <property type="component" value="Chromosome 5"/>
</dbReference>
<dbReference type="GO" id="GO:0005576">
    <property type="term" value="C:extracellular region"/>
    <property type="evidence" value="ECO:0007669"/>
    <property type="project" value="UniProtKB-SubCell"/>
</dbReference>
<dbReference type="GO" id="GO:0046872">
    <property type="term" value="F:metal ion binding"/>
    <property type="evidence" value="ECO:0007669"/>
    <property type="project" value="UniProtKB-KW"/>
</dbReference>
<dbReference type="GO" id="GO:0004497">
    <property type="term" value="F:monooxygenase activity"/>
    <property type="evidence" value="ECO:0007669"/>
    <property type="project" value="UniProtKB-KW"/>
</dbReference>
<dbReference type="GO" id="GO:0030245">
    <property type="term" value="P:cellulose catabolic process"/>
    <property type="evidence" value="ECO:0007669"/>
    <property type="project" value="UniProtKB-KW"/>
</dbReference>
<dbReference type="Gene3D" id="2.70.50.70">
    <property type="match status" value="1"/>
</dbReference>
<dbReference type="PANTHER" id="PTHR36182:SF2">
    <property type="entry name" value="LYTIC POLYSACCHARIDE MONOOXYGENASE"/>
    <property type="match status" value="1"/>
</dbReference>
<dbReference type="PANTHER" id="PTHR36182">
    <property type="entry name" value="PROTEIN, PUTATIVE (AFU_ORTHOLOGUE AFUA_6G10930)-RELATED"/>
    <property type="match status" value="1"/>
</dbReference>
<feature type="signal peptide" evidence="3">
    <location>
        <begin position="1"/>
        <end position="21"/>
    </location>
</feature>
<feature type="chain" id="PRO_5004246172" description="AA11 family lytic polysaccharide monooxygenase B">
    <location>
        <begin position="22"/>
        <end position="418"/>
    </location>
</feature>
<feature type="region of interest" description="Disordered" evidence="5">
    <location>
        <begin position="226"/>
        <end position="345"/>
    </location>
</feature>
<feature type="compositionally biased region" description="Low complexity" evidence="5">
    <location>
        <begin position="254"/>
        <end position="345"/>
    </location>
</feature>
<feature type="binding site" evidence="2">
    <location>
        <position position="22"/>
    </location>
    <ligand>
        <name>Cu(+)</name>
        <dbReference type="ChEBI" id="CHEBI:49552"/>
        <note>catalytic</note>
    </ligand>
</feature>
<feature type="binding site" evidence="2">
    <location>
        <position position="82"/>
    </location>
    <ligand>
        <name>Cu(+)</name>
        <dbReference type="ChEBI" id="CHEBI:49552"/>
        <note>catalytic</note>
    </ligand>
</feature>
<feature type="glycosylation site" description="N-linked (GlcNAc...) asparagine" evidence="4">
    <location>
        <position position="120"/>
    </location>
</feature>
<feature type="glycosylation site" description="N-linked (GlcNAc...) asparagine" evidence="4">
    <location>
        <position position="134"/>
    </location>
</feature>
<feature type="disulfide bond" evidence="1">
    <location>
        <begin position="50"/>
        <end position="165"/>
    </location>
</feature>
<feature type="disulfide bond" evidence="1">
    <location>
        <begin position="87"/>
        <end position="113"/>
    </location>
</feature>
<feature type="disulfide bond" evidence="2">
    <location>
        <begin position="206"/>
        <end position="240"/>
    </location>
</feature>
<accession>Q4WEH3</accession>